<gene>
    <name evidence="1" type="primary">ybeY</name>
    <name type="ordered locus">MAB_1669</name>
</gene>
<evidence type="ECO:0000255" key="1">
    <source>
        <dbReference type="HAMAP-Rule" id="MF_00009"/>
    </source>
</evidence>
<proteinExistence type="inferred from homology"/>
<feature type="chain" id="PRO_1000089192" description="Endoribonuclease YbeY">
    <location>
        <begin position="1"/>
        <end position="170"/>
    </location>
</feature>
<feature type="binding site" evidence="1">
    <location>
        <position position="118"/>
    </location>
    <ligand>
        <name>Zn(2+)</name>
        <dbReference type="ChEBI" id="CHEBI:29105"/>
        <note>catalytic</note>
    </ligand>
</feature>
<feature type="binding site" evidence="1">
    <location>
        <position position="122"/>
    </location>
    <ligand>
        <name>Zn(2+)</name>
        <dbReference type="ChEBI" id="CHEBI:29105"/>
        <note>catalytic</note>
    </ligand>
</feature>
<feature type="binding site" evidence="1">
    <location>
        <position position="128"/>
    </location>
    <ligand>
        <name>Zn(2+)</name>
        <dbReference type="ChEBI" id="CHEBI:29105"/>
        <note>catalytic</note>
    </ligand>
</feature>
<name>YBEY_MYCA9</name>
<reference key="1">
    <citation type="journal article" date="2009" name="PLoS ONE">
        <title>Non mycobacterial virulence genes in the genome of the emerging pathogen Mycobacterium abscessus.</title>
        <authorList>
            <person name="Ripoll F."/>
            <person name="Pasek S."/>
            <person name="Schenowitz C."/>
            <person name="Dossat C."/>
            <person name="Barbe V."/>
            <person name="Rottman M."/>
            <person name="Macheras E."/>
            <person name="Heym B."/>
            <person name="Herrmann J.L."/>
            <person name="Daffe M."/>
            <person name="Brosch R."/>
            <person name="Risler J.L."/>
            <person name="Gaillard J.L."/>
        </authorList>
    </citation>
    <scope>NUCLEOTIDE SEQUENCE [LARGE SCALE GENOMIC DNA]</scope>
    <source>
        <strain>ATCC 19977 / DSM 44196 / CCUG 20993 / CIP 104536 / JCM 13569 / NCTC 13031 / TMC 1543 / L948</strain>
    </source>
</reference>
<sequence length="170" mass="18796">MSIEVVNESGIDVAEGELVSVARFAIAAMDVHPAAELSMMLVDLAAMADLHMRWMDLPGPTDVMSFPMDELEPGGRPDAPEPGPSMLGDIVLCPQFAAEQAEAAGHSLAHELALLTVHGVLHLLGYDHAEPEEEREMFALQNQLLQDWYEQQAQLYRDSRLLDKSRNFDE</sequence>
<comment type="function">
    <text evidence="1">Single strand-specific metallo-endoribonuclease involved in late-stage 70S ribosome quality control and in maturation of the 3' terminus of the 16S rRNA.</text>
</comment>
<comment type="cofactor">
    <cofactor evidence="1">
        <name>Zn(2+)</name>
        <dbReference type="ChEBI" id="CHEBI:29105"/>
    </cofactor>
    <text evidence="1">Binds 1 zinc ion.</text>
</comment>
<comment type="subcellular location">
    <subcellularLocation>
        <location evidence="1">Cytoplasm</location>
    </subcellularLocation>
</comment>
<comment type="similarity">
    <text evidence="1">Belongs to the endoribonuclease YbeY family.</text>
</comment>
<protein>
    <recommendedName>
        <fullName evidence="1">Endoribonuclease YbeY</fullName>
        <ecNumber evidence="1">3.1.-.-</ecNumber>
    </recommendedName>
</protein>
<organism>
    <name type="scientific">Mycobacteroides abscessus (strain ATCC 19977 / DSM 44196 / CCUG 20993 / CIP 104536 / JCM 13569 / NCTC 13031 / TMC 1543 / L948)</name>
    <name type="common">Mycobacterium abscessus</name>
    <dbReference type="NCBI Taxonomy" id="561007"/>
    <lineage>
        <taxon>Bacteria</taxon>
        <taxon>Bacillati</taxon>
        <taxon>Actinomycetota</taxon>
        <taxon>Actinomycetes</taxon>
        <taxon>Mycobacteriales</taxon>
        <taxon>Mycobacteriaceae</taxon>
        <taxon>Mycobacteroides</taxon>
        <taxon>Mycobacteroides abscessus</taxon>
    </lineage>
</organism>
<dbReference type="EC" id="3.1.-.-" evidence="1"/>
<dbReference type="EMBL" id="CU458896">
    <property type="protein sequence ID" value="CAM61754.1"/>
    <property type="molecule type" value="Genomic_DNA"/>
</dbReference>
<dbReference type="RefSeq" id="WP_005060346.1">
    <property type="nucleotide sequence ID" value="NZ_MLCG01000002.1"/>
</dbReference>
<dbReference type="SMR" id="B1MN42"/>
<dbReference type="GeneID" id="93378620"/>
<dbReference type="KEGG" id="mab:MAB_1669"/>
<dbReference type="Proteomes" id="UP000007137">
    <property type="component" value="Chromosome"/>
</dbReference>
<dbReference type="GO" id="GO:0005737">
    <property type="term" value="C:cytoplasm"/>
    <property type="evidence" value="ECO:0007669"/>
    <property type="project" value="UniProtKB-SubCell"/>
</dbReference>
<dbReference type="GO" id="GO:0004222">
    <property type="term" value="F:metalloendopeptidase activity"/>
    <property type="evidence" value="ECO:0007669"/>
    <property type="project" value="InterPro"/>
</dbReference>
<dbReference type="GO" id="GO:0004521">
    <property type="term" value="F:RNA endonuclease activity"/>
    <property type="evidence" value="ECO:0007669"/>
    <property type="project" value="UniProtKB-UniRule"/>
</dbReference>
<dbReference type="GO" id="GO:0008270">
    <property type="term" value="F:zinc ion binding"/>
    <property type="evidence" value="ECO:0007669"/>
    <property type="project" value="UniProtKB-UniRule"/>
</dbReference>
<dbReference type="GO" id="GO:0006364">
    <property type="term" value="P:rRNA processing"/>
    <property type="evidence" value="ECO:0007669"/>
    <property type="project" value="UniProtKB-UniRule"/>
</dbReference>
<dbReference type="Gene3D" id="3.40.390.30">
    <property type="entry name" value="Metalloproteases ('zincins'), catalytic domain"/>
    <property type="match status" value="1"/>
</dbReference>
<dbReference type="HAMAP" id="MF_00009">
    <property type="entry name" value="Endoribonucl_YbeY"/>
    <property type="match status" value="1"/>
</dbReference>
<dbReference type="InterPro" id="IPR023091">
    <property type="entry name" value="MetalPrtase_cat_dom_sf_prd"/>
</dbReference>
<dbReference type="InterPro" id="IPR002036">
    <property type="entry name" value="YbeY"/>
</dbReference>
<dbReference type="InterPro" id="IPR020549">
    <property type="entry name" value="YbeY_CS"/>
</dbReference>
<dbReference type="NCBIfam" id="TIGR00043">
    <property type="entry name" value="rRNA maturation RNase YbeY"/>
    <property type="match status" value="1"/>
</dbReference>
<dbReference type="PANTHER" id="PTHR46986">
    <property type="entry name" value="ENDORIBONUCLEASE YBEY, CHLOROPLASTIC"/>
    <property type="match status" value="1"/>
</dbReference>
<dbReference type="PANTHER" id="PTHR46986:SF1">
    <property type="entry name" value="ENDORIBONUCLEASE YBEY, CHLOROPLASTIC"/>
    <property type="match status" value="1"/>
</dbReference>
<dbReference type="Pfam" id="PF02130">
    <property type="entry name" value="YbeY"/>
    <property type="match status" value="1"/>
</dbReference>
<dbReference type="SUPFAM" id="SSF55486">
    <property type="entry name" value="Metalloproteases ('zincins'), catalytic domain"/>
    <property type="match status" value="1"/>
</dbReference>
<dbReference type="PROSITE" id="PS01306">
    <property type="entry name" value="UPF0054"/>
    <property type="match status" value="1"/>
</dbReference>
<accession>B1MN42</accession>
<keyword id="KW-0963">Cytoplasm</keyword>
<keyword id="KW-0255">Endonuclease</keyword>
<keyword id="KW-0378">Hydrolase</keyword>
<keyword id="KW-0479">Metal-binding</keyword>
<keyword id="KW-0540">Nuclease</keyword>
<keyword id="KW-1185">Reference proteome</keyword>
<keyword id="KW-0690">Ribosome biogenesis</keyword>
<keyword id="KW-0698">rRNA processing</keyword>
<keyword id="KW-0862">Zinc</keyword>